<reference key="1">
    <citation type="submission" date="2006-12" db="EMBL/GenBank/DDBJ databases">
        <authorList>
            <person name="Hendrix L."/>
            <person name="Mohamoud Y."/>
            <person name="Radune D."/>
            <person name="Shvartsbeyn A."/>
            <person name="Daugherty S."/>
            <person name="Dodson R."/>
            <person name="Durkin A.S."/>
            <person name="Harkins D."/>
            <person name="Huot H."/>
            <person name="Kothari S.P."/>
            <person name="Madupu R."/>
            <person name="Li J."/>
            <person name="Nelson W.C."/>
            <person name="Shrivastava S."/>
            <person name="Giglio M.G."/>
            <person name="Haft D."/>
            <person name="Selengut J."/>
            <person name="Fraser-Ligget C."/>
            <person name="Seshadri R."/>
        </authorList>
    </citation>
    <scope>NUCLEOTIDE SEQUENCE [LARGE SCALE GENOMIC DNA]</scope>
    <source>
        <strain>ATCC 35685 / KC583 / Herrer 020/F12,63</strain>
    </source>
</reference>
<feature type="chain" id="PRO_1000001152" description="Ribosome maturation factor RimM">
    <location>
        <begin position="1"/>
        <end position="191"/>
    </location>
</feature>
<feature type="domain" description="PRC barrel" evidence="1">
    <location>
        <begin position="99"/>
        <end position="172"/>
    </location>
</feature>
<name>RIMM_BARBK</name>
<proteinExistence type="inferred from homology"/>
<sequence>MEHNKKELNKAVLLAVIRAAHGIRGDVVVNLLGAEPQRLKTYGVLYDDKGRLYEIVSMRVHKNNVIVRFKGVDDRSTAEALKGVQLYIERDQFADDLDTDEFYQIDLIGLRVYDNTNQLLGEVSGFFNFGAGDLLEVRLISHKTELIPFSKAAVPEICVASGFLVVDPVAAGLFSDPHSFNDLALNDLEKG</sequence>
<accession>A1UR20</accession>
<comment type="function">
    <text evidence="1">An accessory protein needed during the final step in the assembly of 30S ribosomal subunit, possibly for assembly of the head region. Essential for efficient processing of 16S rRNA. May be needed both before and after RbfA during the maturation of 16S rRNA. It has affinity for free ribosomal 30S subunits but not for 70S ribosomes.</text>
</comment>
<comment type="subunit">
    <text evidence="1">Binds ribosomal protein uS19.</text>
</comment>
<comment type="subcellular location">
    <subcellularLocation>
        <location evidence="1">Cytoplasm</location>
    </subcellularLocation>
</comment>
<comment type="domain">
    <text evidence="1">The PRC barrel domain binds ribosomal protein uS19.</text>
</comment>
<comment type="similarity">
    <text evidence="1">Belongs to the RimM family.</text>
</comment>
<gene>
    <name evidence="1" type="primary">rimM</name>
    <name type="ordered locus">BARBAKC583_0085</name>
</gene>
<evidence type="ECO:0000255" key="1">
    <source>
        <dbReference type="HAMAP-Rule" id="MF_00014"/>
    </source>
</evidence>
<organism>
    <name type="scientific">Bartonella bacilliformis (strain ATCC 35685 / KC583 / Herrer 020/F12,63)</name>
    <dbReference type="NCBI Taxonomy" id="360095"/>
    <lineage>
        <taxon>Bacteria</taxon>
        <taxon>Pseudomonadati</taxon>
        <taxon>Pseudomonadota</taxon>
        <taxon>Alphaproteobacteria</taxon>
        <taxon>Hyphomicrobiales</taxon>
        <taxon>Bartonellaceae</taxon>
        <taxon>Bartonella</taxon>
    </lineage>
</organism>
<protein>
    <recommendedName>
        <fullName evidence="1">Ribosome maturation factor RimM</fullName>
    </recommendedName>
</protein>
<keyword id="KW-0143">Chaperone</keyword>
<keyword id="KW-0963">Cytoplasm</keyword>
<keyword id="KW-0690">Ribosome biogenesis</keyword>
<keyword id="KW-0698">rRNA processing</keyword>
<dbReference type="EMBL" id="CP000524">
    <property type="protein sequence ID" value="ABM45319.1"/>
    <property type="molecule type" value="Genomic_DNA"/>
</dbReference>
<dbReference type="RefSeq" id="WP_011807247.1">
    <property type="nucleotide sequence ID" value="NC_008783.1"/>
</dbReference>
<dbReference type="SMR" id="A1UR20"/>
<dbReference type="STRING" id="360095.BARBAKC583_0085"/>
<dbReference type="GeneID" id="4684403"/>
<dbReference type="KEGG" id="bbk:BARBAKC583_0085"/>
<dbReference type="PATRIC" id="fig|360095.6.peg.85"/>
<dbReference type="eggNOG" id="COG0806">
    <property type="taxonomic scope" value="Bacteria"/>
</dbReference>
<dbReference type="HOGENOM" id="CLU_077636_0_1_5"/>
<dbReference type="OrthoDB" id="9788191at2"/>
<dbReference type="Proteomes" id="UP000000643">
    <property type="component" value="Chromosome"/>
</dbReference>
<dbReference type="GO" id="GO:0005737">
    <property type="term" value="C:cytoplasm"/>
    <property type="evidence" value="ECO:0007669"/>
    <property type="project" value="UniProtKB-SubCell"/>
</dbReference>
<dbReference type="GO" id="GO:0005840">
    <property type="term" value="C:ribosome"/>
    <property type="evidence" value="ECO:0007669"/>
    <property type="project" value="InterPro"/>
</dbReference>
<dbReference type="GO" id="GO:0043022">
    <property type="term" value="F:ribosome binding"/>
    <property type="evidence" value="ECO:0007669"/>
    <property type="project" value="InterPro"/>
</dbReference>
<dbReference type="GO" id="GO:0042274">
    <property type="term" value="P:ribosomal small subunit biogenesis"/>
    <property type="evidence" value="ECO:0007669"/>
    <property type="project" value="UniProtKB-UniRule"/>
</dbReference>
<dbReference type="GO" id="GO:0006364">
    <property type="term" value="P:rRNA processing"/>
    <property type="evidence" value="ECO:0007669"/>
    <property type="project" value="UniProtKB-UniRule"/>
</dbReference>
<dbReference type="Gene3D" id="2.30.30.240">
    <property type="entry name" value="PRC-barrel domain"/>
    <property type="match status" value="1"/>
</dbReference>
<dbReference type="Gene3D" id="2.40.30.60">
    <property type="entry name" value="RimM"/>
    <property type="match status" value="1"/>
</dbReference>
<dbReference type="HAMAP" id="MF_00014">
    <property type="entry name" value="Ribosome_mat_RimM"/>
    <property type="match status" value="1"/>
</dbReference>
<dbReference type="InterPro" id="IPR011033">
    <property type="entry name" value="PRC_barrel-like_sf"/>
</dbReference>
<dbReference type="InterPro" id="IPR056792">
    <property type="entry name" value="PRC_RimM"/>
</dbReference>
<dbReference type="InterPro" id="IPR011961">
    <property type="entry name" value="RimM"/>
</dbReference>
<dbReference type="InterPro" id="IPR002676">
    <property type="entry name" value="RimM_N"/>
</dbReference>
<dbReference type="InterPro" id="IPR036976">
    <property type="entry name" value="RimM_N_sf"/>
</dbReference>
<dbReference type="InterPro" id="IPR009000">
    <property type="entry name" value="Transl_B-barrel_sf"/>
</dbReference>
<dbReference type="NCBIfam" id="TIGR02273">
    <property type="entry name" value="16S_RimM"/>
    <property type="match status" value="1"/>
</dbReference>
<dbReference type="PANTHER" id="PTHR33692">
    <property type="entry name" value="RIBOSOME MATURATION FACTOR RIMM"/>
    <property type="match status" value="1"/>
</dbReference>
<dbReference type="PANTHER" id="PTHR33692:SF1">
    <property type="entry name" value="RIBOSOME MATURATION FACTOR RIMM"/>
    <property type="match status" value="1"/>
</dbReference>
<dbReference type="Pfam" id="PF24986">
    <property type="entry name" value="PRC_RimM"/>
    <property type="match status" value="1"/>
</dbReference>
<dbReference type="Pfam" id="PF01782">
    <property type="entry name" value="RimM"/>
    <property type="match status" value="1"/>
</dbReference>
<dbReference type="SUPFAM" id="SSF50346">
    <property type="entry name" value="PRC-barrel domain"/>
    <property type="match status" value="1"/>
</dbReference>
<dbReference type="SUPFAM" id="SSF50447">
    <property type="entry name" value="Translation proteins"/>
    <property type="match status" value="1"/>
</dbReference>